<sequence length="513" mass="57156">MITSPLLAYVAILFFCVLKASSLDTFIAAVYEHAAILPDAPLTPVSHEEALMLMNRNLDLLEGAVTSAAKQGAHIIVTPEDGVYGFFFSRESIYSYLEDIPDPHVNWIPCTNPSRFGHTPVQKRLSCLARDNSIYIVANIGDKKPCNASDPDCPHDGRYQYNTDVVFDSEGRLVARYHKQNLFLGEDQFDAPKEPEIVTFDTTFGRFGIFTCFGILFHDPAVTLVKDFQVDTILFPTAWMNVLPHLTAIEFHSAWAMGMRVNFLAANIHFPLRKMTGSGIYAPDSPRAFHYDMKTKEGKLLLSQLDSHPHRPAVNWTSYASGLPTPLVGNQEFKSTVFFDEFTFLELKGVAGNYTVCQKDLCCQLSYRMLEKREDEVYALGAFDGLHTVEGSYYLQICTLLKCKTMDLHSCGDSVETASTRFEMFSLSGTFGTQYVFPEVLLSDIQLAPGEFQVSSDGRLFSLKPPSGPVLTVTLFGRLYERDSASGASADLVAQGLRVMLGVIITIMYSLSW</sequence>
<organism>
    <name type="scientific">Sus scrofa</name>
    <name type="common">Pig</name>
    <dbReference type="NCBI Taxonomy" id="9823"/>
    <lineage>
        <taxon>Eukaryota</taxon>
        <taxon>Metazoa</taxon>
        <taxon>Chordata</taxon>
        <taxon>Craniata</taxon>
        <taxon>Vertebrata</taxon>
        <taxon>Euteleostomi</taxon>
        <taxon>Mammalia</taxon>
        <taxon>Eutheria</taxon>
        <taxon>Laurasiatheria</taxon>
        <taxon>Artiodactyla</taxon>
        <taxon>Suina</taxon>
        <taxon>Suidae</taxon>
        <taxon>Sus</taxon>
    </lineage>
</organism>
<proteinExistence type="evidence at protein level"/>
<dbReference type="EC" id="3.5.1.92" evidence="5"/>
<dbReference type="EMBL" id="AF350911">
    <property type="protein sequence ID" value="AAK29437.2"/>
    <property type="molecule type" value="mRNA"/>
</dbReference>
<dbReference type="RefSeq" id="NP_999298.1">
    <property type="nucleotide sequence ID" value="NM_214133.1"/>
</dbReference>
<dbReference type="SMR" id="Q9BDJ5"/>
<dbReference type="FunCoup" id="Q9BDJ5">
    <property type="interactions" value="42"/>
</dbReference>
<dbReference type="STRING" id="9823.ENSSSCP00000004514"/>
<dbReference type="GlyCosmos" id="Q9BDJ5">
    <property type="glycosylation" value="3 sites, No reported glycans"/>
</dbReference>
<dbReference type="GlyGen" id="Q9BDJ5">
    <property type="glycosylation" value="3 sites"/>
</dbReference>
<dbReference type="PaxDb" id="9823-ENSSSCP00000004514"/>
<dbReference type="GeneID" id="397246"/>
<dbReference type="KEGG" id="ssc:397246"/>
<dbReference type="CTD" id="8876"/>
<dbReference type="eggNOG" id="KOG0806">
    <property type="taxonomic scope" value="Eukaryota"/>
</dbReference>
<dbReference type="InParanoid" id="Q9BDJ5"/>
<dbReference type="OrthoDB" id="10250282at2759"/>
<dbReference type="BRENDA" id="3.5.1.92">
    <property type="organism ID" value="6170"/>
</dbReference>
<dbReference type="Proteomes" id="UP000008227">
    <property type="component" value="Unplaced"/>
</dbReference>
<dbReference type="Proteomes" id="UP000314985">
    <property type="component" value="Unplaced"/>
</dbReference>
<dbReference type="Proteomes" id="UP000694570">
    <property type="component" value="Unplaced"/>
</dbReference>
<dbReference type="Proteomes" id="UP000694571">
    <property type="component" value="Unplaced"/>
</dbReference>
<dbReference type="Proteomes" id="UP000694720">
    <property type="component" value="Unplaced"/>
</dbReference>
<dbReference type="Proteomes" id="UP000694722">
    <property type="component" value="Unplaced"/>
</dbReference>
<dbReference type="Proteomes" id="UP000694723">
    <property type="component" value="Unplaced"/>
</dbReference>
<dbReference type="Proteomes" id="UP000694724">
    <property type="component" value="Unplaced"/>
</dbReference>
<dbReference type="Proteomes" id="UP000694725">
    <property type="component" value="Unplaced"/>
</dbReference>
<dbReference type="Proteomes" id="UP000694726">
    <property type="component" value="Unplaced"/>
</dbReference>
<dbReference type="Proteomes" id="UP000694727">
    <property type="component" value="Unplaced"/>
</dbReference>
<dbReference type="Proteomes" id="UP000694728">
    <property type="component" value="Unplaced"/>
</dbReference>
<dbReference type="GO" id="GO:0005886">
    <property type="term" value="C:plasma membrane"/>
    <property type="evidence" value="ECO:0007669"/>
    <property type="project" value="UniProtKB-SubCell"/>
</dbReference>
<dbReference type="GO" id="GO:0098552">
    <property type="term" value="C:side of membrane"/>
    <property type="evidence" value="ECO:0007669"/>
    <property type="project" value="UniProtKB-KW"/>
</dbReference>
<dbReference type="GO" id="GO:0017159">
    <property type="term" value="F:pantetheine hydrolase activity"/>
    <property type="evidence" value="ECO:0000250"/>
    <property type="project" value="UniProtKB"/>
</dbReference>
<dbReference type="GO" id="GO:0015939">
    <property type="term" value="P:pantothenate metabolic process"/>
    <property type="evidence" value="ECO:0000250"/>
    <property type="project" value="UniProtKB"/>
</dbReference>
<dbReference type="CDD" id="cd07567">
    <property type="entry name" value="biotinidase_like"/>
    <property type="match status" value="1"/>
</dbReference>
<dbReference type="FunFam" id="3.60.110.10:FF:000001">
    <property type="entry name" value="biotinidase isoform X1"/>
    <property type="match status" value="1"/>
</dbReference>
<dbReference type="Gene3D" id="3.60.110.10">
    <property type="entry name" value="Carbon-nitrogen hydrolase"/>
    <property type="match status" value="1"/>
</dbReference>
<dbReference type="InterPro" id="IPR012101">
    <property type="entry name" value="Biotinidase-like_euk"/>
</dbReference>
<dbReference type="InterPro" id="IPR040154">
    <property type="entry name" value="Biotinidase/VNN"/>
</dbReference>
<dbReference type="InterPro" id="IPR003010">
    <property type="entry name" value="C-N_Hydrolase"/>
</dbReference>
<dbReference type="InterPro" id="IPR036526">
    <property type="entry name" value="C-N_Hydrolase_sf"/>
</dbReference>
<dbReference type="InterPro" id="IPR043957">
    <property type="entry name" value="Vanin_C"/>
</dbReference>
<dbReference type="PANTHER" id="PTHR10609">
    <property type="entry name" value="BIOTINIDASE-RELATED"/>
    <property type="match status" value="1"/>
</dbReference>
<dbReference type="PANTHER" id="PTHR10609:SF16">
    <property type="entry name" value="PANTETHEINASE"/>
    <property type="match status" value="1"/>
</dbReference>
<dbReference type="Pfam" id="PF00795">
    <property type="entry name" value="CN_hydrolase"/>
    <property type="match status" value="1"/>
</dbReference>
<dbReference type="Pfam" id="PF19018">
    <property type="entry name" value="Vanin_C"/>
    <property type="match status" value="1"/>
</dbReference>
<dbReference type="PIRSF" id="PIRSF011861">
    <property type="entry name" value="Biotinidase"/>
    <property type="match status" value="1"/>
</dbReference>
<dbReference type="SUPFAM" id="SSF56317">
    <property type="entry name" value="Carbon-nitrogen hydrolase"/>
    <property type="match status" value="1"/>
</dbReference>
<dbReference type="PROSITE" id="PS50263">
    <property type="entry name" value="CN_HYDROLASE"/>
    <property type="match status" value="1"/>
</dbReference>
<gene>
    <name type="primary">VNN1</name>
</gene>
<accession>Q9BDJ5</accession>
<name>VNN1_PIG</name>
<evidence type="ECO:0000250" key="1"/>
<evidence type="ECO:0000250" key="2">
    <source>
        <dbReference type="UniProtKB" id="O95497"/>
    </source>
</evidence>
<evidence type="ECO:0000255" key="3"/>
<evidence type="ECO:0000255" key="4">
    <source>
        <dbReference type="PROSITE-ProRule" id="PRU00054"/>
    </source>
</evidence>
<evidence type="ECO:0000269" key="5">
    <source>
    </source>
</evidence>
<evidence type="ECO:0000305" key="6"/>
<comment type="function">
    <text evidence="5">Amidohydrolase that hydrolyzes specifically one of the carboamide linkages in D-pantetheine thus recycling pantothenic acid (vitamin B5) and releasing cysteamine.</text>
</comment>
<comment type="catalytic activity">
    <reaction evidence="5">
        <text>(R)-pantetheine + H2O = cysteamine + (R)-pantothenate</text>
        <dbReference type="Rhea" id="RHEA:13445"/>
        <dbReference type="ChEBI" id="CHEBI:15377"/>
        <dbReference type="ChEBI" id="CHEBI:16753"/>
        <dbReference type="ChEBI" id="CHEBI:29032"/>
        <dbReference type="ChEBI" id="CHEBI:58029"/>
        <dbReference type="EC" id="3.5.1.92"/>
    </reaction>
</comment>
<comment type="subunit">
    <text evidence="2">Monomer.</text>
</comment>
<comment type="subcellular location">
    <subcellularLocation>
        <location evidence="6">Cell membrane</location>
        <topology evidence="6">Lipid-anchor</topology>
        <topology evidence="6">GPI-anchor</topology>
    </subcellularLocation>
</comment>
<comment type="tissue specificity">
    <text evidence="5">Detected in kidney (at protein level).</text>
</comment>
<comment type="similarity">
    <text evidence="6">Belongs to the carbon-nitrogen hydrolase superfamily. BTD/VNN family.</text>
</comment>
<keyword id="KW-1003">Cell membrane</keyword>
<keyword id="KW-0903">Direct protein sequencing</keyword>
<keyword id="KW-0325">Glycoprotein</keyword>
<keyword id="KW-0336">GPI-anchor</keyword>
<keyword id="KW-0378">Hydrolase</keyword>
<keyword id="KW-0449">Lipoprotein</keyword>
<keyword id="KW-0472">Membrane</keyword>
<keyword id="KW-1185">Reference proteome</keyword>
<keyword id="KW-0732">Signal</keyword>
<feature type="signal peptide" evidence="1">
    <location>
        <begin position="1"/>
        <end position="22"/>
    </location>
</feature>
<feature type="chain" id="PRO_0000019716" description="Pantetheinase">
    <location>
        <begin position="23"/>
        <end position="487"/>
    </location>
</feature>
<feature type="propeptide" id="PRO_0000019717" description="Removed in mature form" evidence="3">
    <location>
        <begin position="488"/>
        <end position="513"/>
    </location>
</feature>
<feature type="domain" description="CN hydrolase" evidence="4">
    <location>
        <begin position="40"/>
        <end position="307"/>
    </location>
</feature>
<feature type="active site" description="Proton acceptor" evidence="4">
    <location>
        <position position="80"/>
    </location>
</feature>
<feature type="active site" description="Proton donor" evidence="4">
    <location>
        <position position="179"/>
    </location>
</feature>
<feature type="active site" description="Nucleophile" evidence="4">
    <location>
        <position position="212"/>
    </location>
</feature>
<feature type="lipid moiety-binding region" description="GPI-anchor amidated glycine" evidence="3">
    <location>
        <position position="487"/>
    </location>
</feature>
<feature type="glycosylation site" description="N-linked (GlcNAc...) asparagine" evidence="3">
    <location>
        <position position="147"/>
    </location>
</feature>
<feature type="glycosylation site" description="N-linked (GlcNAc...) asparagine" evidence="3">
    <location>
        <position position="315"/>
    </location>
</feature>
<feature type="glycosylation site" description="N-linked (GlcNAc...) asparagine" evidence="3">
    <location>
        <position position="353"/>
    </location>
</feature>
<reference key="1">
    <citation type="submission" date="2001-04" db="EMBL/GenBank/DDBJ databases">
        <title>Sus scrofa vanin-1 cDNA, partial sequences.</title>
        <authorList>
            <person name="Paradis V."/>
            <person name="Silversides D.W."/>
        </authorList>
    </citation>
    <scope>NUCLEOTIDE SEQUENCE [MRNA]</scope>
</reference>
<reference key="2">
    <citation type="journal article" date="1999" name="FEBS Lett.">
        <title>Is pantetheinase the actual identity of mouse and human vanin-1 proteins?</title>
        <authorList>
            <person name="Maras B."/>
            <person name="Barra D."/>
            <person name="Dupre S."/>
            <person name="Pitari G."/>
        </authorList>
    </citation>
    <scope>PARTIAL PROTEIN SEQUENCE</scope>
    <scope>CATALYTIC ACTIVITY</scope>
    <scope>FUNCTION</scope>
    <scope>TISSUE SPECIFICITY</scope>
</reference>
<protein>
    <recommendedName>
        <fullName>Pantetheinase</fullName>
        <ecNumber evidence="5">3.5.1.92</ecNumber>
    </recommendedName>
    <alternativeName>
        <fullName>Pantetheine hydrolase</fullName>
    </alternativeName>
    <alternativeName>
        <fullName>Vascular non-inflammatory molecule 1</fullName>
        <shortName>Vanin-1</shortName>
    </alternativeName>
</protein>